<comment type="subunit">
    <text>This is one of six apparently different protein chains that constitute the peanut protein arachin.</text>
</comment>
<feature type="chain" id="PRO_0000102606" description="Arachin 25 kDa protein">
    <location>
        <begin position="1"/>
        <end position="201"/>
    </location>
</feature>
<organism>
    <name type="scientific">Arachis hypogaea</name>
    <name type="common">Peanut</name>
    <dbReference type="NCBI Taxonomy" id="3818"/>
    <lineage>
        <taxon>Eukaryota</taxon>
        <taxon>Viridiplantae</taxon>
        <taxon>Streptophyta</taxon>
        <taxon>Embryophyta</taxon>
        <taxon>Tracheophyta</taxon>
        <taxon>Spermatophyta</taxon>
        <taxon>Magnoliopsida</taxon>
        <taxon>eudicotyledons</taxon>
        <taxon>Gunneridae</taxon>
        <taxon>Pentapetalae</taxon>
        <taxon>rosids</taxon>
        <taxon>fabids</taxon>
        <taxon>Fabales</taxon>
        <taxon>Fabaceae</taxon>
        <taxon>Papilionoideae</taxon>
        <taxon>50 kb inversion clade</taxon>
        <taxon>dalbergioids sensu lato</taxon>
        <taxon>Dalbergieae</taxon>
        <taxon>Pterocarpus clade</taxon>
        <taxon>Arachis</taxon>
    </lineage>
</organism>
<proteinExistence type="evidence at protein level"/>
<sequence length="201" mass="22219">TDSEPGAVILGFKASMTDVYAFPMTIGVRAHEPSDVMSKVRALEPSDMSKRAVAGMKEFYVRAEGIHGTDKSPVITARMKPVHSIGSVRAHFIDGKPTPIKVRAFGPITESMLDEHSMTIGRYEVIASRKYPSDYRHVFGMETSALDRVYAIKGEHRAFSDVSPTHATIEMESPAAHDFLYGRAKVDEPMTIRVAFHSTCM</sequence>
<name>ARA5_ARAHY</name>
<dbReference type="PIR" id="A03350">
    <property type="entry name" value="KNNP"/>
</dbReference>
<dbReference type="GO" id="GO:0045735">
    <property type="term" value="F:nutrient reservoir activity"/>
    <property type="evidence" value="ECO:0007669"/>
    <property type="project" value="UniProtKB-KW"/>
</dbReference>
<keyword id="KW-0903">Direct protein sequencing</keyword>
<keyword id="KW-0708">Seed storage protein</keyword>
<keyword id="KW-0758">Storage protein</keyword>
<accession>P04149</accession>
<reference key="1">
    <citation type="journal article" date="1985" name="Biochem. Int.">
        <title>Complete amino acid sequence of an arachin sub-unit.</title>
        <authorList>
            <person name="Bhushan R."/>
            <person name="Goyal R.N."/>
            <person name="Agarwal A."/>
        </authorList>
    </citation>
    <scope>PROTEIN SEQUENCE</scope>
    <source>
        <strain>cv. type 25</strain>
    </source>
</reference>
<protein>
    <recommendedName>
        <fullName>Arachin 25 kDa protein</fullName>
    </recommendedName>
</protein>